<comment type="subcellular location">
    <subcellularLocation>
        <location evidence="1">Cell membrane</location>
        <topology evidence="1">Lipid-anchor</topology>
    </subcellularLocation>
</comment>
<comment type="similarity">
    <text evidence="2">Belongs to the staphylococcal tandem lipoprotein family.</text>
</comment>
<comment type="sequence caution" evidence="2">
    <conflict type="erroneous initiation">
        <sequence resource="EMBL-CDS" id="CAI80082"/>
    </conflict>
</comment>
<dbReference type="EMBL" id="AJ938182">
    <property type="protein sequence ID" value="CAI80082.1"/>
    <property type="status" value="ALT_INIT"/>
    <property type="molecule type" value="Genomic_DNA"/>
</dbReference>
<dbReference type="RefSeq" id="WP_001269770.1">
    <property type="nucleotide sequence ID" value="NC_007622.1"/>
</dbReference>
<dbReference type="SMR" id="Q2YVQ6"/>
<dbReference type="KEGG" id="sab:SAB0394"/>
<dbReference type="HOGENOM" id="CLU_071589_0_1_9"/>
<dbReference type="GO" id="GO:0005886">
    <property type="term" value="C:plasma membrane"/>
    <property type="evidence" value="ECO:0007669"/>
    <property type="project" value="UniProtKB-SubCell"/>
</dbReference>
<dbReference type="Gene3D" id="2.50.20.40">
    <property type="match status" value="1"/>
</dbReference>
<dbReference type="InterPro" id="IPR007595">
    <property type="entry name" value="Csa"/>
</dbReference>
<dbReference type="InterPro" id="IPR038641">
    <property type="entry name" value="Csa_sf"/>
</dbReference>
<dbReference type="NCBIfam" id="TIGR01742">
    <property type="entry name" value="SA_tandem_lipo"/>
    <property type="match status" value="1"/>
</dbReference>
<dbReference type="Pfam" id="PF04507">
    <property type="entry name" value="DUF576"/>
    <property type="match status" value="1"/>
</dbReference>
<dbReference type="PROSITE" id="PS51257">
    <property type="entry name" value="PROKAR_LIPOPROTEIN"/>
    <property type="match status" value="1"/>
</dbReference>
<evidence type="ECO:0000255" key="1">
    <source>
        <dbReference type="PROSITE-ProRule" id="PRU00303"/>
    </source>
</evidence>
<evidence type="ECO:0000305" key="2"/>
<accession>Q2YVQ6</accession>
<organism>
    <name type="scientific">Staphylococcus aureus (strain bovine RF122 / ET3-1)</name>
    <dbReference type="NCBI Taxonomy" id="273036"/>
    <lineage>
        <taxon>Bacteria</taxon>
        <taxon>Bacillati</taxon>
        <taxon>Bacillota</taxon>
        <taxon>Bacilli</taxon>
        <taxon>Bacillales</taxon>
        <taxon>Staphylococcaceae</taxon>
        <taxon>Staphylococcus</taxon>
    </lineage>
</organism>
<reference key="1">
    <citation type="journal article" date="2007" name="PLoS ONE">
        <title>Molecular correlates of host specialization in Staphylococcus aureus.</title>
        <authorList>
            <person name="Herron-Olson L."/>
            <person name="Fitzgerald J.R."/>
            <person name="Musser J.M."/>
            <person name="Kapur V."/>
        </authorList>
    </citation>
    <scope>NUCLEOTIDE SEQUENCE [LARGE SCALE GENOMIC DNA]</scope>
    <source>
        <strain>bovine RF122 / ET3-1</strain>
    </source>
</reference>
<gene>
    <name type="ordered locus">SAB0394</name>
</gene>
<proteinExistence type="inferred from homology"/>
<name>Y394_STAAB</name>
<keyword id="KW-1003">Cell membrane</keyword>
<keyword id="KW-0449">Lipoprotein</keyword>
<keyword id="KW-0472">Membrane</keyword>
<keyword id="KW-0564">Palmitate</keyword>
<keyword id="KW-0732">Signal</keyword>
<protein>
    <recommendedName>
        <fullName>Uncharacterized lipoprotein SAB0394</fullName>
    </recommendedName>
</protein>
<sequence>MRYLKRVVLYRIVMVLSVFIIGCDKSSDTSEKPKEDSKEAQIKKSFAKTLDMYPIENLEDFYDKEGYRDGEFKKDDKGTWLIRSEIVKQPKGKVMKTRGMQLYINRNTKTAKGFFVLKEISENNNRVNKDKEEKYEVKMVGNKIIPTEQINDEKIKKEIENFKFFVQYGNFKNFEKYNNGEFSYNPEAPIYSAKYQLHNDDYNVRQLRKRYEISTKEAPKLLLKGGGDLKDSSVGQNDIEFTFVERKGENIYFNDSVEFIPSK</sequence>
<feature type="signal peptide" evidence="1">
    <location>
        <begin position="1"/>
        <end position="22"/>
    </location>
</feature>
<feature type="chain" id="PRO_0000282099" description="Uncharacterized lipoprotein SAB0394">
    <location>
        <begin position="23"/>
        <end position="263"/>
    </location>
</feature>
<feature type="lipid moiety-binding region" description="N-palmitoyl cysteine" evidence="1">
    <location>
        <position position="23"/>
    </location>
</feature>
<feature type="lipid moiety-binding region" description="S-diacylglycerol cysteine" evidence="1">
    <location>
        <position position="23"/>
    </location>
</feature>